<sequence>MSAKISIFQALVFLFYRFILRRYRNSKPKYQNGPSSLLQSDLSRHTLIFNVEGALLKSDSLFPYFMLVAFEAGGVIRSFLLFILYPLISLMSHEMGVKVMVMVSFFGIKKEGFRAGRAVLPKYFLEDVGLEMFEVLKRGGKKIGVSDDLPQVMIEGFLRDYLEIDVVVGREMKVVGGYYLGIMEDKTKHDLVFDELVRKERLNTGRVIGITSFNTSLHRYLFSQFCQEIYFVKKSDKRSWQTLPRSQYPKPLIFHDGRLAIKPTLMNTLVLFMWGPFAAAAAAARLFVSLCIPYSLSIPILAFSGCRLTVTNDYVSSQKQKPSQRKGCLFVCNHRTLLDPLYVAFALRKKNIKTVTYSLSRVSEILAPIKTVRLTRDRVSDGQAMEKLLTEGDLVVCPEGTTCREPYLLRFSPLFTEVSDVIVPVAVTVHVTFFYGTTASGLKALDPLFFLLDPYPTYTIQFLDPVSGATCQDPDGKLKFEVANNVQSDIGKALDFECTSLTRKDKYLILAGNNGVVKKN</sequence>
<comment type="function">
    <text evidence="1">Esterifies acyl-group from acyl-ACP to the sn-1 position of glycerol-3-phosphate, an essential step in glycerolipid biosynthesis.</text>
</comment>
<comment type="catalytic activity">
    <reaction>
        <text>sn-glycerol 3-phosphate + an acyl-CoA = a 1-acyl-sn-glycero-3-phosphate + CoA</text>
        <dbReference type="Rhea" id="RHEA:15325"/>
        <dbReference type="ChEBI" id="CHEBI:57287"/>
        <dbReference type="ChEBI" id="CHEBI:57597"/>
        <dbReference type="ChEBI" id="CHEBI:57970"/>
        <dbReference type="ChEBI" id="CHEBI:58342"/>
        <dbReference type="EC" id="2.3.1.15"/>
    </reaction>
</comment>
<comment type="pathway">
    <text>Phospholipid metabolism; CDP-diacylglycerol biosynthesis; CDP-diacylglycerol from sn-glycerol 3-phosphate: step 1/3.</text>
</comment>
<comment type="subcellular location">
    <subcellularLocation>
        <location evidence="4">Membrane</location>
        <topology evidence="4">Multi-pass membrane protein</topology>
    </subcellularLocation>
</comment>
<comment type="tissue specificity">
    <text evidence="3">Widely expressed at low level. Expressed at higher level in seedlings and leaves.</text>
</comment>
<comment type="domain">
    <text evidence="1">The HXXXXD motif is essential for acyltransferase activity and may constitute the binding site for the phosphate moiety of the glycerol-3-phosphate.</text>
</comment>
<comment type="similarity">
    <text evidence="4">Belongs to the GPAT/DAPAT family.</text>
</comment>
<name>GPAT3_ARATH</name>
<gene>
    <name type="primary">GPAT3</name>
    <name type="ordered locus">At4g01950</name>
    <name type="ORF">T7B11.21</name>
</gene>
<dbReference type="EC" id="2.3.1.15"/>
<dbReference type="EMBL" id="AC007138">
    <property type="protein sequence ID" value="AAD22657.1"/>
    <property type="molecule type" value="Genomic_DNA"/>
</dbReference>
<dbReference type="EMBL" id="AL161493">
    <property type="protein sequence ID" value="CAB80688.1"/>
    <property type="molecule type" value="Genomic_DNA"/>
</dbReference>
<dbReference type="EMBL" id="CP002687">
    <property type="protein sequence ID" value="AEE82104.1"/>
    <property type="molecule type" value="Genomic_DNA"/>
</dbReference>
<dbReference type="EMBL" id="AY149949">
    <property type="protein sequence ID" value="AAN31103.1"/>
    <property type="molecule type" value="mRNA"/>
</dbReference>
<dbReference type="EMBL" id="AY094395">
    <property type="protein sequence ID" value="AAM19774.1"/>
    <property type="molecule type" value="mRNA"/>
</dbReference>
<dbReference type="PIR" id="A85025">
    <property type="entry name" value="A85025"/>
</dbReference>
<dbReference type="RefSeq" id="NP_192104.1">
    <property type="nucleotide sequence ID" value="NM_116426.3"/>
</dbReference>
<dbReference type="STRING" id="3702.Q9SYJ2"/>
<dbReference type="PaxDb" id="3702-AT4G01950.1"/>
<dbReference type="EnsemblPlants" id="AT4G01950.1">
    <property type="protein sequence ID" value="AT4G01950.1"/>
    <property type="gene ID" value="AT4G01950"/>
</dbReference>
<dbReference type="GeneID" id="827165"/>
<dbReference type="Gramene" id="AT4G01950.1">
    <property type="protein sequence ID" value="AT4G01950.1"/>
    <property type="gene ID" value="AT4G01950"/>
</dbReference>
<dbReference type="KEGG" id="ath:AT4G01950"/>
<dbReference type="Araport" id="AT4G01950"/>
<dbReference type="TAIR" id="AT4G01950">
    <property type="gene designation" value="GPAT3"/>
</dbReference>
<dbReference type="eggNOG" id="ENOG502QRJ7">
    <property type="taxonomic scope" value="Eukaryota"/>
</dbReference>
<dbReference type="HOGENOM" id="CLU_028504_1_0_1"/>
<dbReference type="InParanoid" id="Q9SYJ2"/>
<dbReference type="OrthoDB" id="1854593at2759"/>
<dbReference type="PhylomeDB" id="Q9SYJ2"/>
<dbReference type="BRENDA" id="2.3.1.15">
    <property type="organism ID" value="399"/>
</dbReference>
<dbReference type="UniPathway" id="UPA00557">
    <property type="reaction ID" value="UER00612"/>
</dbReference>
<dbReference type="PRO" id="PR:Q9SYJ2"/>
<dbReference type="Proteomes" id="UP000006548">
    <property type="component" value="Chromosome 4"/>
</dbReference>
<dbReference type="ExpressionAtlas" id="Q9SYJ2">
    <property type="expression patterns" value="baseline and differential"/>
</dbReference>
<dbReference type="GO" id="GO:0016020">
    <property type="term" value="C:membrane"/>
    <property type="evidence" value="ECO:0007669"/>
    <property type="project" value="UniProtKB-SubCell"/>
</dbReference>
<dbReference type="GO" id="GO:0090447">
    <property type="term" value="F:glycerol-3-phosphate 2-O-acyltransferase activity"/>
    <property type="evidence" value="ECO:0007669"/>
    <property type="project" value="UniProtKB-ARBA"/>
</dbReference>
<dbReference type="GO" id="GO:0004366">
    <property type="term" value="F:glycerol-3-phosphate O-acyltransferase activity"/>
    <property type="evidence" value="ECO:0007669"/>
    <property type="project" value="UniProtKB-EC"/>
</dbReference>
<dbReference type="GO" id="GO:0016024">
    <property type="term" value="P:CDP-diacylglycerol biosynthetic process"/>
    <property type="evidence" value="ECO:0007669"/>
    <property type="project" value="UniProtKB-UniPathway"/>
</dbReference>
<dbReference type="InterPro" id="IPR056462">
    <property type="entry name" value="HAD_RAM2/GPAT1-8"/>
</dbReference>
<dbReference type="InterPro" id="IPR002123">
    <property type="entry name" value="Plipid/glycerol_acylTrfase"/>
</dbReference>
<dbReference type="PANTHER" id="PTHR15486">
    <property type="entry name" value="ANCIENT UBIQUITOUS PROTEIN"/>
    <property type="match status" value="1"/>
</dbReference>
<dbReference type="PANTHER" id="PTHR15486:SF56">
    <property type="entry name" value="GLYCEROL-3-PHOSPHATE ACYLTRANSFERASE 3-RELATED"/>
    <property type="match status" value="1"/>
</dbReference>
<dbReference type="Pfam" id="PF01553">
    <property type="entry name" value="Acyltransferase"/>
    <property type="match status" value="1"/>
</dbReference>
<dbReference type="Pfam" id="PF23270">
    <property type="entry name" value="HAD_RAM2_N"/>
    <property type="match status" value="1"/>
</dbReference>
<dbReference type="SMART" id="SM00563">
    <property type="entry name" value="PlsC"/>
    <property type="match status" value="1"/>
</dbReference>
<dbReference type="SUPFAM" id="SSF69593">
    <property type="entry name" value="Glycerol-3-phosphate (1)-acyltransferase"/>
    <property type="match status" value="1"/>
</dbReference>
<organism>
    <name type="scientific">Arabidopsis thaliana</name>
    <name type="common">Mouse-ear cress</name>
    <dbReference type="NCBI Taxonomy" id="3702"/>
    <lineage>
        <taxon>Eukaryota</taxon>
        <taxon>Viridiplantae</taxon>
        <taxon>Streptophyta</taxon>
        <taxon>Embryophyta</taxon>
        <taxon>Tracheophyta</taxon>
        <taxon>Spermatophyta</taxon>
        <taxon>Magnoliopsida</taxon>
        <taxon>eudicotyledons</taxon>
        <taxon>Gunneridae</taxon>
        <taxon>Pentapetalae</taxon>
        <taxon>rosids</taxon>
        <taxon>malvids</taxon>
        <taxon>Brassicales</taxon>
        <taxon>Brassicaceae</taxon>
        <taxon>Camelineae</taxon>
        <taxon>Arabidopsis</taxon>
    </lineage>
</organism>
<accession>Q9SYJ2</accession>
<protein>
    <recommendedName>
        <fullName>Probable glycerol-3-phosphate acyltransferase 3</fullName>
        <shortName>AtGPAT3</shortName>
        <ecNumber>2.3.1.15</ecNumber>
    </recommendedName>
</protein>
<feature type="chain" id="PRO_0000195251" description="Probable glycerol-3-phosphate acyltransferase 3">
    <location>
        <begin position="1"/>
        <end position="520"/>
    </location>
</feature>
<feature type="transmembrane region" description="Helical" evidence="2">
    <location>
        <begin position="5"/>
        <end position="20"/>
    </location>
</feature>
<feature type="transmembrane region" description="Helical" evidence="2">
    <location>
        <begin position="64"/>
        <end position="84"/>
    </location>
</feature>
<feature type="transmembrane region" description="Helical" evidence="2">
    <location>
        <begin position="88"/>
        <end position="108"/>
    </location>
</feature>
<feature type="transmembrane region" description="Helical" evidence="2">
    <location>
        <begin position="264"/>
        <end position="284"/>
    </location>
</feature>
<feature type="transmembrane region" description="Helical" evidence="2">
    <location>
        <begin position="286"/>
        <end position="306"/>
    </location>
</feature>
<feature type="short sequence motif" description="HXXXXD motif">
    <location>
        <begin position="334"/>
        <end position="339"/>
    </location>
</feature>
<evidence type="ECO:0000250" key="1"/>
<evidence type="ECO:0000255" key="2"/>
<evidence type="ECO:0000269" key="3">
    <source>
    </source>
</evidence>
<evidence type="ECO:0000305" key="4"/>
<keyword id="KW-0012">Acyltransferase</keyword>
<keyword id="KW-0444">Lipid biosynthesis</keyword>
<keyword id="KW-0443">Lipid metabolism</keyword>
<keyword id="KW-0472">Membrane</keyword>
<keyword id="KW-0594">Phospholipid biosynthesis</keyword>
<keyword id="KW-1208">Phospholipid metabolism</keyword>
<keyword id="KW-1185">Reference proteome</keyword>
<keyword id="KW-0808">Transferase</keyword>
<keyword id="KW-0812">Transmembrane</keyword>
<keyword id="KW-1133">Transmembrane helix</keyword>
<reference key="1">
    <citation type="journal article" date="1999" name="Nature">
        <title>Sequence and analysis of chromosome 4 of the plant Arabidopsis thaliana.</title>
        <authorList>
            <person name="Mayer K.F.X."/>
            <person name="Schueller C."/>
            <person name="Wambutt R."/>
            <person name="Murphy G."/>
            <person name="Volckaert G."/>
            <person name="Pohl T."/>
            <person name="Duesterhoeft A."/>
            <person name="Stiekema W."/>
            <person name="Entian K.-D."/>
            <person name="Terryn N."/>
            <person name="Harris B."/>
            <person name="Ansorge W."/>
            <person name="Brandt P."/>
            <person name="Grivell L.A."/>
            <person name="Rieger M."/>
            <person name="Weichselgartner M."/>
            <person name="de Simone V."/>
            <person name="Obermaier B."/>
            <person name="Mache R."/>
            <person name="Mueller M."/>
            <person name="Kreis M."/>
            <person name="Delseny M."/>
            <person name="Puigdomenech P."/>
            <person name="Watson M."/>
            <person name="Schmidtheini T."/>
            <person name="Reichert B."/>
            <person name="Portetelle D."/>
            <person name="Perez-Alonso M."/>
            <person name="Boutry M."/>
            <person name="Bancroft I."/>
            <person name="Vos P."/>
            <person name="Hoheisel J."/>
            <person name="Zimmermann W."/>
            <person name="Wedler H."/>
            <person name="Ridley P."/>
            <person name="Langham S.-A."/>
            <person name="McCullagh B."/>
            <person name="Bilham L."/>
            <person name="Robben J."/>
            <person name="van der Schueren J."/>
            <person name="Grymonprez B."/>
            <person name="Chuang Y.-J."/>
            <person name="Vandenbussche F."/>
            <person name="Braeken M."/>
            <person name="Weltjens I."/>
            <person name="Voet M."/>
            <person name="Bastiaens I."/>
            <person name="Aert R."/>
            <person name="Defoor E."/>
            <person name="Weitzenegger T."/>
            <person name="Bothe G."/>
            <person name="Ramsperger U."/>
            <person name="Hilbert H."/>
            <person name="Braun M."/>
            <person name="Holzer E."/>
            <person name="Brandt A."/>
            <person name="Peters S."/>
            <person name="van Staveren M."/>
            <person name="Dirkse W."/>
            <person name="Mooijman P."/>
            <person name="Klein Lankhorst R."/>
            <person name="Rose M."/>
            <person name="Hauf J."/>
            <person name="Koetter P."/>
            <person name="Berneiser S."/>
            <person name="Hempel S."/>
            <person name="Feldpausch M."/>
            <person name="Lamberth S."/>
            <person name="Van den Daele H."/>
            <person name="De Keyser A."/>
            <person name="Buysshaert C."/>
            <person name="Gielen J."/>
            <person name="Villarroel R."/>
            <person name="De Clercq R."/>
            <person name="van Montagu M."/>
            <person name="Rogers J."/>
            <person name="Cronin A."/>
            <person name="Quail M.A."/>
            <person name="Bray-Allen S."/>
            <person name="Clark L."/>
            <person name="Doggett J."/>
            <person name="Hall S."/>
            <person name="Kay M."/>
            <person name="Lennard N."/>
            <person name="McLay K."/>
            <person name="Mayes R."/>
            <person name="Pettett A."/>
            <person name="Rajandream M.A."/>
            <person name="Lyne M."/>
            <person name="Benes V."/>
            <person name="Rechmann S."/>
            <person name="Borkova D."/>
            <person name="Bloecker H."/>
            <person name="Scharfe M."/>
            <person name="Grimm M."/>
            <person name="Loehnert T.-H."/>
            <person name="Dose S."/>
            <person name="de Haan M."/>
            <person name="Maarse A.C."/>
            <person name="Schaefer M."/>
            <person name="Mueller-Auer S."/>
            <person name="Gabel C."/>
            <person name="Fuchs M."/>
            <person name="Fartmann B."/>
            <person name="Granderath K."/>
            <person name="Dauner D."/>
            <person name="Herzl A."/>
            <person name="Neumann S."/>
            <person name="Argiriou A."/>
            <person name="Vitale D."/>
            <person name="Liguori R."/>
            <person name="Piravandi E."/>
            <person name="Massenet O."/>
            <person name="Quigley F."/>
            <person name="Clabauld G."/>
            <person name="Muendlein A."/>
            <person name="Felber R."/>
            <person name="Schnabl S."/>
            <person name="Hiller R."/>
            <person name="Schmidt W."/>
            <person name="Lecharny A."/>
            <person name="Aubourg S."/>
            <person name="Chefdor F."/>
            <person name="Cooke R."/>
            <person name="Berger C."/>
            <person name="Monfort A."/>
            <person name="Casacuberta E."/>
            <person name="Gibbons T."/>
            <person name="Weber N."/>
            <person name="Vandenbol M."/>
            <person name="Bargues M."/>
            <person name="Terol J."/>
            <person name="Torres A."/>
            <person name="Perez-Perez A."/>
            <person name="Purnelle B."/>
            <person name="Bent E."/>
            <person name="Johnson S."/>
            <person name="Tacon D."/>
            <person name="Jesse T."/>
            <person name="Heijnen L."/>
            <person name="Schwarz S."/>
            <person name="Scholler P."/>
            <person name="Heber S."/>
            <person name="Francs P."/>
            <person name="Bielke C."/>
            <person name="Frishman D."/>
            <person name="Haase D."/>
            <person name="Lemcke K."/>
            <person name="Mewes H.-W."/>
            <person name="Stocker S."/>
            <person name="Zaccaria P."/>
            <person name="Bevan M."/>
            <person name="Wilson R.K."/>
            <person name="de la Bastide M."/>
            <person name="Habermann K."/>
            <person name="Parnell L."/>
            <person name="Dedhia N."/>
            <person name="Gnoj L."/>
            <person name="Schutz K."/>
            <person name="Huang E."/>
            <person name="Spiegel L."/>
            <person name="Sekhon M."/>
            <person name="Murray J."/>
            <person name="Sheet P."/>
            <person name="Cordes M."/>
            <person name="Abu-Threideh J."/>
            <person name="Stoneking T."/>
            <person name="Kalicki J."/>
            <person name="Graves T."/>
            <person name="Harmon G."/>
            <person name="Edwards J."/>
            <person name="Latreille P."/>
            <person name="Courtney L."/>
            <person name="Cloud J."/>
            <person name="Abbott A."/>
            <person name="Scott K."/>
            <person name="Johnson D."/>
            <person name="Minx P."/>
            <person name="Bentley D."/>
            <person name="Fulton B."/>
            <person name="Miller N."/>
            <person name="Greco T."/>
            <person name="Kemp K."/>
            <person name="Kramer J."/>
            <person name="Fulton L."/>
            <person name="Mardis E."/>
            <person name="Dante M."/>
            <person name="Pepin K."/>
            <person name="Hillier L.W."/>
            <person name="Nelson J."/>
            <person name="Spieth J."/>
            <person name="Ryan E."/>
            <person name="Andrews S."/>
            <person name="Geisel C."/>
            <person name="Layman D."/>
            <person name="Du H."/>
            <person name="Ali J."/>
            <person name="Berghoff A."/>
            <person name="Jones K."/>
            <person name="Drone K."/>
            <person name="Cotton M."/>
            <person name="Joshu C."/>
            <person name="Antonoiu B."/>
            <person name="Zidanic M."/>
            <person name="Strong C."/>
            <person name="Sun H."/>
            <person name="Lamar B."/>
            <person name="Yordan C."/>
            <person name="Ma P."/>
            <person name="Zhong J."/>
            <person name="Preston R."/>
            <person name="Vil D."/>
            <person name="Shekher M."/>
            <person name="Matero A."/>
            <person name="Shah R."/>
            <person name="Swaby I.K."/>
            <person name="O'Shaughnessy A."/>
            <person name="Rodriguez M."/>
            <person name="Hoffman J."/>
            <person name="Till S."/>
            <person name="Granat S."/>
            <person name="Shohdy N."/>
            <person name="Hasegawa A."/>
            <person name="Hameed A."/>
            <person name="Lodhi M."/>
            <person name="Johnson A."/>
            <person name="Chen E."/>
            <person name="Marra M.A."/>
            <person name="Martienssen R."/>
            <person name="McCombie W.R."/>
        </authorList>
    </citation>
    <scope>NUCLEOTIDE SEQUENCE [LARGE SCALE GENOMIC DNA]</scope>
    <source>
        <strain>cv. Columbia</strain>
    </source>
</reference>
<reference key="2">
    <citation type="journal article" date="2017" name="Plant J.">
        <title>Araport11: a complete reannotation of the Arabidopsis thaliana reference genome.</title>
        <authorList>
            <person name="Cheng C.Y."/>
            <person name="Krishnakumar V."/>
            <person name="Chan A.P."/>
            <person name="Thibaud-Nissen F."/>
            <person name="Schobel S."/>
            <person name="Town C.D."/>
        </authorList>
    </citation>
    <scope>GENOME REANNOTATION</scope>
    <source>
        <strain>cv. Columbia</strain>
    </source>
</reference>
<reference key="3">
    <citation type="journal article" date="2003" name="Science">
        <title>Empirical analysis of transcriptional activity in the Arabidopsis genome.</title>
        <authorList>
            <person name="Yamada K."/>
            <person name="Lim J."/>
            <person name="Dale J.M."/>
            <person name="Chen H."/>
            <person name="Shinn P."/>
            <person name="Palm C.J."/>
            <person name="Southwick A.M."/>
            <person name="Wu H.C."/>
            <person name="Kim C.J."/>
            <person name="Nguyen M."/>
            <person name="Pham P.K."/>
            <person name="Cheuk R.F."/>
            <person name="Karlin-Newmann G."/>
            <person name="Liu S.X."/>
            <person name="Lam B."/>
            <person name="Sakano H."/>
            <person name="Wu T."/>
            <person name="Yu G."/>
            <person name="Miranda M."/>
            <person name="Quach H.L."/>
            <person name="Tripp M."/>
            <person name="Chang C.H."/>
            <person name="Lee J.M."/>
            <person name="Toriumi M.J."/>
            <person name="Chan M.M."/>
            <person name="Tang C.C."/>
            <person name="Onodera C.S."/>
            <person name="Deng J.M."/>
            <person name="Akiyama K."/>
            <person name="Ansari Y."/>
            <person name="Arakawa T."/>
            <person name="Banh J."/>
            <person name="Banno F."/>
            <person name="Bowser L."/>
            <person name="Brooks S.Y."/>
            <person name="Carninci P."/>
            <person name="Chao Q."/>
            <person name="Choy N."/>
            <person name="Enju A."/>
            <person name="Goldsmith A.D."/>
            <person name="Gurjal M."/>
            <person name="Hansen N.F."/>
            <person name="Hayashizaki Y."/>
            <person name="Johnson-Hopson C."/>
            <person name="Hsuan V.W."/>
            <person name="Iida K."/>
            <person name="Karnes M."/>
            <person name="Khan S."/>
            <person name="Koesema E."/>
            <person name="Ishida J."/>
            <person name="Jiang P.X."/>
            <person name="Jones T."/>
            <person name="Kawai J."/>
            <person name="Kamiya A."/>
            <person name="Meyers C."/>
            <person name="Nakajima M."/>
            <person name="Narusaka M."/>
            <person name="Seki M."/>
            <person name="Sakurai T."/>
            <person name="Satou M."/>
            <person name="Tamse R."/>
            <person name="Vaysberg M."/>
            <person name="Wallender E.K."/>
            <person name="Wong C."/>
            <person name="Yamamura Y."/>
            <person name="Yuan S."/>
            <person name="Shinozaki K."/>
            <person name="Davis R.W."/>
            <person name="Theologis A."/>
            <person name="Ecker J.R."/>
        </authorList>
    </citation>
    <scope>NUCLEOTIDE SEQUENCE [LARGE SCALE MRNA]</scope>
    <source>
        <strain>cv. Columbia</strain>
    </source>
</reference>
<reference key="4">
    <citation type="journal article" date="2003" name="Plant Cell">
        <title>Arabidopsis AtGPAT1, a member of the membrane-bound glycerol-3-phosphate acyltransferase gene family, is essential for tapetum differentiation and male fertility.</title>
        <authorList>
            <person name="Zheng Z."/>
            <person name="Xia Q."/>
            <person name="Dauk M."/>
            <person name="Shen W."/>
            <person name="Selvaraj G."/>
            <person name="Zou J."/>
        </authorList>
    </citation>
    <scope>TISSUE SPECIFICITY</scope>
</reference>
<proteinExistence type="evidence at transcript level"/>